<sequence length="373" mass="40284">MEDFIYYNGKKYRKGYTTGTCAAAAAKACVEMILTQEEVSAVQVTTTGGTILEIPVAYQKFSKDKATAAVQKDGGDDIDATHGMWIFVDVDLTDNAEVVLDGGVGIGRATQKGISVAVGEAAINPAPRKNILATVRESLGENRGAKILVYAPEGEERAKRTMNSNLGIIGGISILGTTGIVTPMSDEGWKKSLSMELEMKRNQGLDQIILVPGNYGDDFVQNTLGFSSGNIVSMSNFVGYMLKETQRLAFKKVLMVGHFGKLVKVSAGIFTTYSKDADARAEILVANLALLGAPLSLLQAVEKCNTTEAAGELIEEAGFTQVYDVIVQKIKARSERFLKFTKPSVEVDVVTFSTERGLLAATKDIDVLREEWR</sequence>
<feature type="chain" id="PRO_0000141671" description="Cobalt-precorrin-5B C(1)-methyltransferase">
    <location>
        <begin position="1"/>
        <end position="373"/>
    </location>
</feature>
<name>CBID_LISMF</name>
<accession>Q720N5</accession>
<dbReference type="EC" id="2.1.1.195" evidence="1"/>
<dbReference type="EMBL" id="AE017262">
    <property type="protein sequence ID" value="AAT03979.1"/>
    <property type="molecule type" value="Genomic_DNA"/>
</dbReference>
<dbReference type="RefSeq" id="WP_003724728.1">
    <property type="nucleotide sequence ID" value="NC_002973.6"/>
</dbReference>
<dbReference type="SMR" id="Q720N5"/>
<dbReference type="KEGG" id="lmf:LMOf2365_1203"/>
<dbReference type="HOGENOM" id="CLU_041273_1_0_9"/>
<dbReference type="UniPathway" id="UPA00148">
    <property type="reaction ID" value="UER00227"/>
</dbReference>
<dbReference type="GO" id="GO:0043780">
    <property type="term" value="F:cobalt-precorrin-5B C1-methyltransferase activity"/>
    <property type="evidence" value="ECO:0007669"/>
    <property type="project" value="RHEA"/>
</dbReference>
<dbReference type="GO" id="GO:0019251">
    <property type="term" value="P:anaerobic cobalamin biosynthetic process"/>
    <property type="evidence" value="ECO:0007669"/>
    <property type="project" value="UniProtKB-UniRule"/>
</dbReference>
<dbReference type="GO" id="GO:0032259">
    <property type="term" value="P:methylation"/>
    <property type="evidence" value="ECO:0007669"/>
    <property type="project" value="UniProtKB-KW"/>
</dbReference>
<dbReference type="Gene3D" id="3.30.2110.10">
    <property type="entry name" value="CbiD-like"/>
    <property type="match status" value="1"/>
</dbReference>
<dbReference type="HAMAP" id="MF_00787">
    <property type="entry name" value="CbiD"/>
    <property type="match status" value="1"/>
</dbReference>
<dbReference type="InterPro" id="IPR002748">
    <property type="entry name" value="CbiD"/>
</dbReference>
<dbReference type="InterPro" id="IPR036074">
    <property type="entry name" value="CbiD_sf"/>
</dbReference>
<dbReference type="NCBIfam" id="TIGR00312">
    <property type="entry name" value="cbiD"/>
    <property type="match status" value="1"/>
</dbReference>
<dbReference type="PANTHER" id="PTHR35863">
    <property type="entry name" value="COBALT-PRECORRIN-5B C(1)-METHYLTRANSFERASE"/>
    <property type="match status" value="1"/>
</dbReference>
<dbReference type="PANTHER" id="PTHR35863:SF1">
    <property type="entry name" value="COBALT-PRECORRIN-5B C(1)-METHYLTRANSFERASE"/>
    <property type="match status" value="1"/>
</dbReference>
<dbReference type="Pfam" id="PF01888">
    <property type="entry name" value="CbiD"/>
    <property type="match status" value="1"/>
</dbReference>
<dbReference type="PIRSF" id="PIRSF026782">
    <property type="entry name" value="CbiD"/>
    <property type="match status" value="1"/>
</dbReference>
<dbReference type="SUPFAM" id="SSF111342">
    <property type="entry name" value="CbiD-like"/>
    <property type="match status" value="1"/>
</dbReference>
<keyword id="KW-0169">Cobalamin biosynthesis</keyword>
<keyword id="KW-0489">Methyltransferase</keyword>
<keyword id="KW-0949">S-adenosyl-L-methionine</keyword>
<keyword id="KW-0808">Transferase</keyword>
<protein>
    <recommendedName>
        <fullName evidence="1">Cobalt-precorrin-5B C(1)-methyltransferase</fullName>
        <ecNumber evidence="1">2.1.1.195</ecNumber>
    </recommendedName>
    <alternativeName>
        <fullName evidence="1">Cobalt-precorrin-6A synthase</fullName>
    </alternativeName>
</protein>
<proteinExistence type="inferred from homology"/>
<gene>
    <name evidence="1" type="primary">cbiD</name>
    <name type="ordered locus">LMOf2365_1203</name>
</gene>
<organism>
    <name type="scientific">Listeria monocytogenes serotype 4b (strain F2365)</name>
    <dbReference type="NCBI Taxonomy" id="265669"/>
    <lineage>
        <taxon>Bacteria</taxon>
        <taxon>Bacillati</taxon>
        <taxon>Bacillota</taxon>
        <taxon>Bacilli</taxon>
        <taxon>Bacillales</taxon>
        <taxon>Listeriaceae</taxon>
        <taxon>Listeria</taxon>
    </lineage>
</organism>
<reference key="1">
    <citation type="journal article" date="2004" name="Nucleic Acids Res.">
        <title>Whole genome comparisons of serotype 4b and 1/2a strains of the food-borne pathogen Listeria monocytogenes reveal new insights into the core genome components of this species.</title>
        <authorList>
            <person name="Nelson K.E."/>
            <person name="Fouts D.E."/>
            <person name="Mongodin E.F."/>
            <person name="Ravel J."/>
            <person name="DeBoy R.T."/>
            <person name="Kolonay J.F."/>
            <person name="Rasko D.A."/>
            <person name="Angiuoli S.V."/>
            <person name="Gill S.R."/>
            <person name="Paulsen I.T."/>
            <person name="Peterson J.D."/>
            <person name="White O."/>
            <person name="Nelson W.C."/>
            <person name="Nierman W.C."/>
            <person name="Beanan M.J."/>
            <person name="Brinkac L.M."/>
            <person name="Daugherty S.C."/>
            <person name="Dodson R.J."/>
            <person name="Durkin A.S."/>
            <person name="Madupu R."/>
            <person name="Haft D.H."/>
            <person name="Selengut J."/>
            <person name="Van Aken S.E."/>
            <person name="Khouri H.M."/>
            <person name="Fedorova N."/>
            <person name="Forberger H.A."/>
            <person name="Tran B."/>
            <person name="Kathariou S."/>
            <person name="Wonderling L.D."/>
            <person name="Uhlich G.A."/>
            <person name="Bayles D.O."/>
            <person name="Luchansky J.B."/>
            <person name="Fraser C.M."/>
        </authorList>
    </citation>
    <scope>NUCLEOTIDE SEQUENCE [LARGE SCALE GENOMIC DNA]</scope>
    <source>
        <strain>F2365</strain>
    </source>
</reference>
<comment type="function">
    <text evidence="1">Catalyzes the methylation of C-1 in cobalt-precorrin-5B to form cobalt-precorrin-6A.</text>
</comment>
<comment type="catalytic activity">
    <reaction evidence="1">
        <text>Co-precorrin-5B + S-adenosyl-L-methionine = Co-precorrin-6A + S-adenosyl-L-homocysteine</text>
        <dbReference type="Rhea" id="RHEA:26285"/>
        <dbReference type="ChEBI" id="CHEBI:57856"/>
        <dbReference type="ChEBI" id="CHEBI:59789"/>
        <dbReference type="ChEBI" id="CHEBI:60063"/>
        <dbReference type="ChEBI" id="CHEBI:60064"/>
        <dbReference type="EC" id="2.1.1.195"/>
    </reaction>
</comment>
<comment type="pathway">
    <text evidence="1">Cofactor biosynthesis; adenosylcobalamin biosynthesis; cob(II)yrinate a,c-diamide from sirohydrochlorin (anaerobic route): step 6/10.</text>
</comment>
<comment type="similarity">
    <text evidence="1">Belongs to the CbiD family.</text>
</comment>
<evidence type="ECO:0000255" key="1">
    <source>
        <dbReference type="HAMAP-Rule" id="MF_00787"/>
    </source>
</evidence>